<keyword id="KW-0028">Amino-acid biosynthesis</keyword>
<keyword id="KW-0963">Cytoplasm</keyword>
<keyword id="KW-0315">Glutamine amidotransferase</keyword>
<keyword id="KW-0368">Histidine biosynthesis</keyword>
<keyword id="KW-0378">Hydrolase</keyword>
<keyword id="KW-0456">Lyase</keyword>
<keyword id="KW-1185">Reference proteome</keyword>
<proteinExistence type="inferred from homology"/>
<feature type="chain" id="PRO_0000231732" description="Imidazole glycerol phosphate synthase subunit HisH 1">
    <location>
        <begin position="1"/>
        <end position="213"/>
    </location>
</feature>
<feature type="domain" description="Glutamine amidotransferase type-1" evidence="1">
    <location>
        <begin position="3"/>
        <end position="213"/>
    </location>
</feature>
<feature type="active site" description="Nucleophile" evidence="1">
    <location>
        <position position="81"/>
    </location>
</feature>
<feature type="active site" evidence="1">
    <location>
        <position position="195"/>
    </location>
</feature>
<feature type="active site" evidence="1">
    <location>
        <position position="197"/>
    </location>
</feature>
<protein>
    <recommendedName>
        <fullName evidence="1">Imidazole glycerol phosphate synthase subunit HisH 1</fullName>
        <ecNumber evidence="1">4.3.2.10</ecNumber>
    </recommendedName>
    <alternativeName>
        <fullName evidence="1">IGP synthase glutaminase subunit 1</fullName>
        <ecNumber evidence="1">3.5.1.2</ecNumber>
    </alternativeName>
    <alternativeName>
        <fullName evidence="1">IGP synthase subunit HisH 1</fullName>
    </alternativeName>
    <alternativeName>
        <fullName evidence="1">ImGP synthase subunit HisH 1</fullName>
        <shortName evidence="1">IGPS subunit HisH 1</shortName>
    </alternativeName>
</protein>
<gene>
    <name evidence="1" type="primary">hisH1</name>
    <name type="ordered locus">lpg0750</name>
</gene>
<reference key="1">
    <citation type="journal article" date="2004" name="Science">
        <title>The genomic sequence of the accidental pathogen Legionella pneumophila.</title>
        <authorList>
            <person name="Chien M."/>
            <person name="Morozova I."/>
            <person name="Shi S."/>
            <person name="Sheng H."/>
            <person name="Chen J."/>
            <person name="Gomez S.M."/>
            <person name="Asamani G."/>
            <person name="Hill K."/>
            <person name="Nuara J."/>
            <person name="Feder M."/>
            <person name="Rineer J."/>
            <person name="Greenberg J.J."/>
            <person name="Steshenko V."/>
            <person name="Park S.H."/>
            <person name="Zhao B."/>
            <person name="Teplitskaya E."/>
            <person name="Edwards J.R."/>
            <person name="Pampou S."/>
            <person name="Georghiou A."/>
            <person name="Chou I.-C."/>
            <person name="Iannuccilli W."/>
            <person name="Ulz M.E."/>
            <person name="Kim D.H."/>
            <person name="Geringer-Sameth A."/>
            <person name="Goldsberry C."/>
            <person name="Morozov P."/>
            <person name="Fischer S.G."/>
            <person name="Segal G."/>
            <person name="Qu X."/>
            <person name="Rzhetsky A."/>
            <person name="Zhang P."/>
            <person name="Cayanis E."/>
            <person name="De Jong P.J."/>
            <person name="Ju J."/>
            <person name="Kalachikov S."/>
            <person name="Shuman H.A."/>
            <person name="Russo J.J."/>
        </authorList>
    </citation>
    <scope>NUCLEOTIDE SEQUENCE [LARGE SCALE GENOMIC DNA]</scope>
    <source>
        <strain>Philadelphia 1 / ATCC 33152 / DSM 7513</strain>
    </source>
</reference>
<organism>
    <name type="scientific">Legionella pneumophila subsp. pneumophila (strain Philadelphia 1 / ATCC 33152 / DSM 7513)</name>
    <dbReference type="NCBI Taxonomy" id="272624"/>
    <lineage>
        <taxon>Bacteria</taxon>
        <taxon>Pseudomonadati</taxon>
        <taxon>Pseudomonadota</taxon>
        <taxon>Gammaproteobacteria</taxon>
        <taxon>Legionellales</taxon>
        <taxon>Legionellaceae</taxon>
        <taxon>Legionella</taxon>
    </lineage>
</organism>
<comment type="function">
    <text evidence="1">IGPS catalyzes the conversion of PRFAR and glutamine to IGP, AICAR and glutamate. The HisH subunit provides the glutamine amidotransferase activity that produces the ammonia necessary to HisF for the synthesis of IGP and AICAR.</text>
</comment>
<comment type="catalytic activity">
    <reaction evidence="1">
        <text>5-[(5-phospho-1-deoxy-D-ribulos-1-ylimino)methylamino]-1-(5-phospho-beta-D-ribosyl)imidazole-4-carboxamide + L-glutamine = D-erythro-1-(imidazol-4-yl)glycerol 3-phosphate + 5-amino-1-(5-phospho-beta-D-ribosyl)imidazole-4-carboxamide + L-glutamate + H(+)</text>
        <dbReference type="Rhea" id="RHEA:24793"/>
        <dbReference type="ChEBI" id="CHEBI:15378"/>
        <dbReference type="ChEBI" id="CHEBI:29985"/>
        <dbReference type="ChEBI" id="CHEBI:58278"/>
        <dbReference type="ChEBI" id="CHEBI:58359"/>
        <dbReference type="ChEBI" id="CHEBI:58475"/>
        <dbReference type="ChEBI" id="CHEBI:58525"/>
        <dbReference type="EC" id="4.3.2.10"/>
    </reaction>
</comment>
<comment type="catalytic activity">
    <reaction evidence="1">
        <text>L-glutamine + H2O = L-glutamate + NH4(+)</text>
        <dbReference type="Rhea" id="RHEA:15889"/>
        <dbReference type="ChEBI" id="CHEBI:15377"/>
        <dbReference type="ChEBI" id="CHEBI:28938"/>
        <dbReference type="ChEBI" id="CHEBI:29985"/>
        <dbReference type="ChEBI" id="CHEBI:58359"/>
        <dbReference type="EC" id="3.5.1.2"/>
    </reaction>
</comment>
<comment type="pathway">
    <text evidence="1">Amino-acid biosynthesis; L-histidine biosynthesis; L-histidine from 5-phospho-alpha-D-ribose 1-diphosphate: step 5/9.</text>
</comment>
<comment type="subunit">
    <text evidence="1">Heterodimer of HisH and HisF.</text>
</comment>
<comment type="subcellular location">
    <subcellularLocation>
        <location evidence="1">Cytoplasm</location>
    </subcellularLocation>
</comment>
<evidence type="ECO:0000255" key="1">
    <source>
        <dbReference type="HAMAP-Rule" id="MF_00278"/>
    </source>
</evidence>
<name>HIS51_LEGPH</name>
<accession>Q5ZXI1</accession>
<dbReference type="EC" id="4.3.2.10" evidence="1"/>
<dbReference type="EC" id="3.5.1.2" evidence="1"/>
<dbReference type="EMBL" id="AE017354">
    <property type="protein sequence ID" value="AAU26839.1"/>
    <property type="molecule type" value="Genomic_DNA"/>
</dbReference>
<dbReference type="RefSeq" id="YP_094786.1">
    <property type="nucleotide sequence ID" value="NC_002942.5"/>
</dbReference>
<dbReference type="SMR" id="Q5ZXI1"/>
<dbReference type="STRING" id="272624.lpg0750"/>
<dbReference type="PaxDb" id="272624-lpg0750"/>
<dbReference type="KEGG" id="lpn:lpg0750"/>
<dbReference type="PATRIC" id="fig|272624.6.peg.775"/>
<dbReference type="eggNOG" id="COG0118">
    <property type="taxonomic scope" value="Bacteria"/>
</dbReference>
<dbReference type="HOGENOM" id="CLU_071837_2_2_6"/>
<dbReference type="OrthoDB" id="9807137at2"/>
<dbReference type="UniPathway" id="UPA00031">
    <property type="reaction ID" value="UER00010"/>
</dbReference>
<dbReference type="Proteomes" id="UP000000609">
    <property type="component" value="Chromosome"/>
</dbReference>
<dbReference type="GO" id="GO:0005737">
    <property type="term" value="C:cytoplasm"/>
    <property type="evidence" value="ECO:0007669"/>
    <property type="project" value="UniProtKB-SubCell"/>
</dbReference>
<dbReference type="GO" id="GO:0004359">
    <property type="term" value="F:glutaminase activity"/>
    <property type="evidence" value="ECO:0007669"/>
    <property type="project" value="UniProtKB-EC"/>
</dbReference>
<dbReference type="GO" id="GO:0000107">
    <property type="term" value="F:imidazoleglycerol-phosphate synthase activity"/>
    <property type="evidence" value="ECO:0007669"/>
    <property type="project" value="UniProtKB-UniRule"/>
</dbReference>
<dbReference type="GO" id="GO:0016829">
    <property type="term" value="F:lyase activity"/>
    <property type="evidence" value="ECO:0007669"/>
    <property type="project" value="UniProtKB-KW"/>
</dbReference>
<dbReference type="GO" id="GO:0000105">
    <property type="term" value="P:L-histidine biosynthetic process"/>
    <property type="evidence" value="ECO:0007669"/>
    <property type="project" value="UniProtKB-UniRule"/>
</dbReference>
<dbReference type="CDD" id="cd01748">
    <property type="entry name" value="GATase1_IGP_Synthase"/>
    <property type="match status" value="1"/>
</dbReference>
<dbReference type="Gene3D" id="3.40.50.880">
    <property type="match status" value="1"/>
</dbReference>
<dbReference type="HAMAP" id="MF_00278">
    <property type="entry name" value="HisH"/>
    <property type="match status" value="1"/>
</dbReference>
<dbReference type="InterPro" id="IPR029062">
    <property type="entry name" value="Class_I_gatase-like"/>
</dbReference>
<dbReference type="InterPro" id="IPR017926">
    <property type="entry name" value="GATASE"/>
</dbReference>
<dbReference type="InterPro" id="IPR010139">
    <property type="entry name" value="Imidazole-glycPsynth_HisH"/>
</dbReference>
<dbReference type="NCBIfam" id="TIGR01855">
    <property type="entry name" value="IMP_synth_hisH"/>
    <property type="match status" value="1"/>
</dbReference>
<dbReference type="PANTHER" id="PTHR42701">
    <property type="entry name" value="IMIDAZOLE GLYCEROL PHOSPHATE SYNTHASE SUBUNIT HISH"/>
    <property type="match status" value="1"/>
</dbReference>
<dbReference type="PANTHER" id="PTHR42701:SF1">
    <property type="entry name" value="IMIDAZOLE GLYCEROL PHOSPHATE SYNTHASE SUBUNIT HISH"/>
    <property type="match status" value="1"/>
</dbReference>
<dbReference type="Pfam" id="PF00117">
    <property type="entry name" value="GATase"/>
    <property type="match status" value="1"/>
</dbReference>
<dbReference type="PIRSF" id="PIRSF000495">
    <property type="entry name" value="Amidotransf_hisH"/>
    <property type="match status" value="1"/>
</dbReference>
<dbReference type="SUPFAM" id="SSF52317">
    <property type="entry name" value="Class I glutamine amidotransferase-like"/>
    <property type="match status" value="1"/>
</dbReference>
<dbReference type="PROSITE" id="PS51273">
    <property type="entry name" value="GATASE_TYPE_1"/>
    <property type="match status" value="1"/>
</dbReference>
<sequence length="213" mass="23310">MSSVSIVDYGVGNLLSVARAFQYFDASVNLVSTPEEIMSADRLVLPGVGAFEDGMKGLTTLNFIEPIKQFARSGKPFLGICLGMQMMLSRSTEFGQHEGLDLIAGEVVSVPSHGVDGQLHKIPHIGWNELVSTSEGEDWCHTILKNIPLNSSVYFVHSFMAMPSNPKKRLADTLYDGQAISAVIKDENMYGCQFHPEKSGEVGLSIIQQFLQI</sequence>